<keyword id="KW-0028">Amino-acid biosynthesis</keyword>
<keyword id="KW-0057">Aromatic amino acid biosynthesis</keyword>
<keyword id="KW-0210">Decarboxylase</keyword>
<keyword id="KW-0456">Lyase</keyword>
<keyword id="KW-1185">Reference proteome</keyword>
<keyword id="KW-0822">Tryptophan biosynthesis</keyword>
<proteinExistence type="inferred from homology"/>
<protein>
    <recommendedName>
        <fullName evidence="1">Indole-3-glycerol phosphate synthase</fullName>
        <shortName evidence="1">IGPS</shortName>
        <ecNumber evidence="1">4.1.1.48</ecNumber>
    </recommendedName>
</protein>
<comment type="catalytic activity">
    <reaction evidence="1">
        <text>1-(2-carboxyphenylamino)-1-deoxy-D-ribulose 5-phosphate + H(+) = (1S,2R)-1-C-(indol-3-yl)glycerol 3-phosphate + CO2 + H2O</text>
        <dbReference type="Rhea" id="RHEA:23476"/>
        <dbReference type="ChEBI" id="CHEBI:15377"/>
        <dbReference type="ChEBI" id="CHEBI:15378"/>
        <dbReference type="ChEBI" id="CHEBI:16526"/>
        <dbReference type="ChEBI" id="CHEBI:58613"/>
        <dbReference type="ChEBI" id="CHEBI:58866"/>
        <dbReference type="EC" id="4.1.1.48"/>
    </reaction>
</comment>
<comment type="pathway">
    <text evidence="1">Amino-acid biosynthesis; L-tryptophan biosynthesis; L-tryptophan from chorismate: step 4/5.</text>
</comment>
<comment type="similarity">
    <text evidence="1">Belongs to the TrpC family.</text>
</comment>
<accession>B1YLS2</accession>
<gene>
    <name evidence="1" type="primary">trpC</name>
    <name type="ordered locus">Exig_0925</name>
</gene>
<name>TRPC_EXIS2</name>
<dbReference type="EC" id="4.1.1.48" evidence="1"/>
<dbReference type="EMBL" id="CP001022">
    <property type="protein sequence ID" value="ACB60405.1"/>
    <property type="molecule type" value="Genomic_DNA"/>
</dbReference>
<dbReference type="RefSeq" id="WP_012369829.1">
    <property type="nucleotide sequence ID" value="NC_010556.1"/>
</dbReference>
<dbReference type="SMR" id="B1YLS2"/>
<dbReference type="STRING" id="262543.Exig_0925"/>
<dbReference type="KEGG" id="esi:Exig_0925"/>
<dbReference type="eggNOG" id="COG0134">
    <property type="taxonomic scope" value="Bacteria"/>
</dbReference>
<dbReference type="HOGENOM" id="CLU_034247_2_1_9"/>
<dbReference type="OrthoDB" id="9804217at2"/>
<dbReference type="UniPathway" id="UPA00035">
    <property type="reaction ID" value="UER00043"/>
</dbReference>
<dbReference type="Proteomes" id="UP000001681">
    <property type="component" value="Chromosome"/>
</dbReference>
<dbReference type="GO" id="GO:0004425">
    <property type="term" value="F:indole-3-glycerol-phosphate synthase activity"/>
    <property type="evidence" value="ECO:0007669"/>
    <property type="project" value="UniProtKB-UniRule"/>
</dbReference>
<dbReference type="GO" id="GO:0004640">
    <property type="term" value="F:phosphoribosylanthranilate isomerase activity"/>
    <property type="evidence" value="ECO:0007669"/>
    <property type="project" value="TreeGrafter"/>
</dbReference>
<dbReference type="GO" id="GO:0000162">
    <property type="term" value="P:L-tryptophan biosynthetic process"/>
    <property type="evidence" value="ECO:0007669"/>
    <property type="project" value="UniProtKB-UniRule"/>
</dbReference>
<dbReference type="CDD" id="cd00331">
    <property type="entry name" value="IGPS"/>
    <property type="match status" value="1"/>
</dbReference>
<dbReference type="FunFam" id="3.20.20.70:FF:000024">
    <property type="entry name" value="Indole-3-glycerol phosphate synthase"/>
    <property type="match status" value="1"/>
</dbReference>
<dbReference type="Gene3D" id="3.20.20.70">
    <property type="entry name" value="Aldolase class I"/>
    <property type="match status" value="1"/>
</dbReference>
<dbReference type="HAMAP" id="MF_00134_B">
    <property type="entry name" value="IGPS_B"/>
    <property type="match status" value="1"/>
</dbReference>
<dbReference type="InterPro" id="IPR013785">
    <property type="entry name" value="Aldolase_TIM"/>
</dbReference>
<dbReference type="InterPro" id="IPR045186">
    <property type="entry name" value="Indole-3-glycerol_P_synth"/>
</dbReference>
<dbReference type="InterPro" id="IPR013798">
    <property type="entry name" value="Indole-3-glycerol_P_synth_dom"/>
</dbReference>
<dbReference type="InterPro" id="IPR001468">
    <property type="entry name" value="Indole-3-GlycerolPSynthase_CS"/>
</dbReference>
<dbReference type="InterPro" id="IPR011060">
    <property type="entry name" value="RibuloseP-bd_barrel"/>
</dbReference>
<dbReference type="NCBIfam" id="NF001371">
    <property type="entry name" value="PRK00278.1-3"/>
    <property type="match status" value="1"/>
</dbReference>
<dbReference type="NCBIfam" id="NF001377">
    <property type="entry name" value="PRK00278.2-4"/>
    <property type="match status" value="1"/>
</dbReference>
<dbReference type="PANTHER" id="PTHR22854:SF2">
    <property type="entry name" value="INDOLE-3-GLYCEROL-PHOSPHATE SYNTHASE"/>
    <property type="match status" value="1"/>
</dbReference>
<dbReference type="PANTHER" id="PTHR22854">
    <property type="entry name" value="TRYPTOPHAN BIOSYNTHESIS PROTEIN"/>
    <property type="match status" value="1"/>
</dbReference>
<dbReference type="Pfam" id="PF00218">
    <property type="entry name" value="IGPS"/>
    <property type="match status" value="1"/>
</dbReference>
<dbReference type="SUPFAM" id="SSF51366">
    <property type="entry name" value="Ribulose-phoshate binding barrel"/>
    <property type="match status" value="1"/>
</dbReference>
<dbReference type="PROSITE" id="PS00614">
    <property type="entry name" value="IGPS"/>
    <property type="match status" value="1"/>
</dbReference>
<evidence type="ECO:0000255" key="1">
    <source>
        <dbReference type="HAMAP-Rule" id="MF_00134"/>
    </source>
</evidence>
<feature type="chain" id="PRO_1000095867" description="Indole-3-glycerol phosphate synthase">
    <location>
        <begin position="1"/>
        <end position="258"/>
    </location>
</feature>
<reference key="1">
    <citation type="submission" date="2008-04" db="EMBL/GenBank/DDBJ databases">
        <title>Complete sequence of chromosome of Exiguobacterium sibiricum 255-15.</title>
        <authorList>
            <consortium name="US DOE Joint Genome Institute"/>
            <person name="Copeland A."/>
            <person name="Lucas S."/>
            <person name="Lapidus A."/>
            <person name="Glavina del Rio T."/>
            <person name="Dalin E."/>
            <person name="Tice H."/>
            <person name="Bruce D."/>
            <person name="Goodwin L."/>
            <person name="Pitluck S."/>
            <person name="Kiss H."/>
            <person name="Chertkov O."/>
            <person name="Monk C."/>
            <person name="Brettin T."/>
            <person name="Detter J.C."/>
            <person name="Han C."/>
            <person name="Kuske C.R."/>
            <person name="Schmutz J."/>
            <person name="Larimer F."/>
            <person name="Land M."/>
            <person name="Hauser L."/>
            <person name="Kyrpides N."/>
            <person name="Mikhailova N."/>
            <person name="Vishnivetskaya T."/>
            <person name="Rodrigues D.F."/>
            <person name="Gilichinsky D."/>
            <person name="Tiedje J."/>
            <person name="Richardson P."/>
        </authorList>
    </citation>
    <scope>NUCLEOTIDE SEQUENCE [LARGE SCALE GENOMIC DNA]</scope>
    <source>
        <strain>DSM 17290 / CCUG 55495 / CIP 109462 / JCM 13490 / 255-15</strain>
    </source>
</reference>
<sequence length="258" mass="28057">MNILDRIIETKRQEVARLKIDGVAQAEARQLNQSIHQSLGGTDLSVIAEIKRASPSKGDISLNVDPVAQAKRYAESGATVISVLTDQTYFKGSMEDLAAVTKAVDVPVLCKDFMIDRIQIDLAKAHGASLILLIVAALDDETLEDLYAYAYASGLEVLVEVHDALELKRAERLQAKILGINNRNLKKFEVSLDTSLELLKTKSPGVRYISESGIKTVAEAQMLHAAGADGILIGETLMRAENPADFIEAVNGVKHDTY</sequence>
<organism>
    <name type="scientific">Exiguobacterium sibiricum (strain DSM 17290 / CCUG 55495 / CIP 109462 / JCM 13490 / 255-15)</name>
    <dbReference type="NCBI Taxonomy" id="262543"/>
    <lineage>
        <taxon>Bacteria</taxon>
        <taxon>Bacillati</taxon>
        <taxon>Bacillota</taxon>
        <taxon>Bacilli</taxon>
        <taxon>Bacillales</taxon>
        <taxon>Bacillales Family XII. Incertae Sedis</taxon>
        <taxon>Exiguobacterium</taxon>
    </lineage>
</organism>